<dbReference type="EC" id="4.2.1.10" evidence="1"/>
<dbReference type="EMBL" id="AM263198">
    <property type="protein sequence ID" value="CAK19880.1"/>
    <property type="molecule type" value="Genomic_DNA"/>
</dbReference>
<dbReference type="RefSeq" id="WP_011701309.1">
    <property type="nucleotide sequence ID" value="NC_008555.1"/>
</dbReference>
<dbReference type="SMR" id="A0AFU8"/>
<dbReference type="STRING" id="386043.lwe0462"/>
<dbReference type="GeneID" id="61188352"/>
<dbReference type="KEGG" id="lwe:lwe0462"/>
<dbReference type="eggNOG" id="COG0710">
    <property type="taxonomic scope" value="Bacteria"/>
</dbReference>
<dbReference type="HOGENOM" id="CLU_064444_0_0_9"/>
<dbReference type="OrthoDB" id="9813659at2"/>
<dbReference type="UniPathway" id="UPA00053">
    <property type="reaction ID" value="UER00086"/>
</dbReference>
<dbReference type="Proteomes" id="UP000000779">
    <property type="component" value="Chromosome"/>
</dbReference>
<dbReference type="GO" id="GO:0003855">
    <property type="term" value="F:3-dehydroquinate dehydratase activity"/>
    <property type="evidence" value="ECO:0007669"/>
    <property type="project" value="UniProtKB-UniRule"/>
</dbReference>
<dbReference type="GO" id="GO:0046279">
    <property type="term" value="P:3,4-dihydroxybenzoate biosynthetic process"/>
    <property type="evidence" value="ECO:0007669"/>
    <property type="project" value="TreeGrafter"/>
</dbReference>
<dbReference type="GO" id="GO:0008652">
    <property type="term" value="P:amino acid biosynthetic process"/>
    <property type="evidence" value="ECO:0007669"/>
    <property type="project" value="UniProtKB-KW"/>
</dbReference>
<dbReference type="GO" id="GO:0009073">
    <property type="term" value="P:aromatic amino acid family biosynthetic process"/>
    <property type="evidence" value="ECO:0007669"/>
    <property type="project" value="UniProtKB-KW"/>
</dbReference>
<dbReference type="GO" id="GO:0009423">
    <property type="term" value="P:chorismate biosynthetic process"/>
    <property type="evidence" value="ECO:0007669"/>
    <property type="project" value="UniProtKB-UniRule"/>
</dbReference>
<dbReference type="CDD" id="cd00502">
    <property type="entry name" value="DHQase_I"/>
    <property type="match status" value="1"/>
</dbReference>
<dbReference type="FunFam" id="3.20.20.70:FF:000047">
    <property type="entry name" value="3-dehydroquinate dehydratase"/>
    <property type="match status" value="1"/>
</dbReference>
<dbReference type="Gene3D" id="3.20.20.70">
    <property type="entry name" value="Aldolase class I"/>
    <property type="match status" value="1"/>
</dbReference>
<dbReference type="HAMAP" id="MF_00214">
    <property type="entry name" value="AroD"/>
    <property type="match status" value="1"/>
</dbReference>
<dbReference type="InterPro" id="IPR018508">
    <property type="entry name" value="3-dehydroquinate_DH_AS"/>
</dbReference>
<dbReference type="InterPro" id="IPR013785">
    <property type="entry name" value="Aldolase_TIM"/>
</dbReference>
<dbReference type="InterPro" id="IPR001381">
    <property type="entry name" value="DHquinase_I"/>
</dbReference>
<dbReference type="InterPro" id="IPR050146">
    <property type="entry name" value="Type-I_3-dehydroquinase"/>
</dbReference>
<dbReference type="NCBIfam" id="TIGR01093">
    <property type="entry name" value="aroD"/>
    <property type="match status" value="1"/>
</dbReference>
<dbReference type="PANTHER" id="PTHR43699">
    <property type="entry name" value="3-DEHYDROQUINATE DEHYDRATASE"/>
    <property type="match status" value="1"/>
</dbReference>
<dbReference type="PANTHER" id="PTHR43699:SF1">
    <property type="entry name" value="3-DEHYDROQUINATE DEHYDRATASE"/>
    <property type="match status" value="1"/>
</dbReference>
<dbReference type="Pfam" id="PF01487">
    <property type="entry name" value="DHquinase_I"/>
    <property type="match status" value="1"/>
</dbReference>
<dbReference type="SUPFAM" id="SSF51569">
    <property type="entry name" value="Aldolase"/>
    <property type="match status" value="1"/>
</dbReference>
<dbReference type="PROSITE" id="PS01028">
    <property type="entry name" value="DEHYDROQUINASE_I"/>
    <property type="match status" value="1"/>
</dbReference>
<accession>A0AFU8</accession>
<gene>
    <name evidence="1" type="primary">aroD</name>
    <name type="ordered locus">lwe0462</name>
</gene>
<proteinExistence type="inferred from homology"/>
<organism>
    <name type="scientific">Listeria welshimeri serovar 6b (strain ATCC 35897 / DSM 20650 / CCUG 15529 / CIP 8149 / NCTC 11857 / SLCC 5334 / V8)</name>
    <dbReference type="NCBI Taxonomy" id="386043"/>
    <lineage>
        <taxon>Bacteria</taxon>
        <taxon>Bacillati</taxon>
        <taxon>Bacillota</taxon>
        <taxon>Bacilli</taxon>
        <taxon>Bacillales</taxon>
        <taxon>Listeriaceae</taxon>
        <taxon>Listeria</taxon>
    </lineage>
</organism>
<sequence length="252" mass="27702">MNKVVVKNVTFGEGAPKICVPMVGKTVAALKEEAEMLKTIDLDVVEWRVDFYEDVKDLAKVETALDEIRVVLPETPILFTFRSAKEGGELAVSDEFYFELNETLARTGKIDLVDVELFNEEADVLRLIETAHKHDVKVVMSNHDFDKTPAKEEIVSRLTRMEALGADLPKIAVMPKSATDVLTLLDATNTVSEKADQPIITMSMAGTGVISRLAGEVFGSAMTFGAAKKASAPGQIDVNELRHVLDLLHKQF</sequence>
<reference key="1">
    <citation type="journal article" date="2006" name="J. Bacteriol.">
        <title>Whole-genome sequence of Listeria welshimeri reveals common steps in genome reduction with Listeria innocua as compared to Listeria monocytogenes.</title>
        <authorList>
            <person name="Hain T."/>
            <person name="Steinweg C."/>
            <person name="Kuenne C.T."/>
            <person name="Billion A."/>
            <person name="Ghai R."/>
            <person name="Chatterjee S.S."/>
            <person name="Domann E."/>
            <person name="Kaerst U."/>
            <person name="Goesmann A."/>
            <person name="Bekel T."/>
            <person name="Bartels D."/>
            <person name="Kaiser O."/>
            <person name="Meyer F."/>
            <person name="Puehler A."/>
            <person name="Weisshaar B."/>
            <person name="Wehland J."/>
            <person name="Liang C."/>
            <person name="Dandekar T."/>
            <person name="Lampidis R."/>
            <person name="Kreft J."/>
            <person name="Goebel W."/>
            <person name="Chakraborty T."/>
        </authorList>
    </citation>
    <scope>NUCLEOTIDE SEQUENCE [LARGE SCALE GENOMIC DNA]</scope>
    <source>
        <strain>ATCC 35897 / DSM 20650 / CCUG 15529 / CIP 8149 / NCTC 11857 / SLCC 5334 / V8</strain>
    </source>
</reference>
<keyword id="KW-0028">Amino-acid biosynthesis</keyword>
<keyword id="KW-0057">Aromatic amino acid biosynthesis</keyword>
<keyword id="KW-0456">Lyase</keyword>
<keyword id="KW-0704">Schiff base</keyword>
<name>AROD_LISW6</name>
<protein>
    <recommendedName>
        <fullName evidence="1">3-dehydroquinate dehydratase</fullName>
        <shortName evidence="1">3-dehydroquinase</shortName>
        <ecNumber evidence="1">4.2.1.10</ecNumber>
    </recommendedName>
    <alternativeName>
        <fullName evidence="1">Type I DHQase</fullName>
    </alternativeName>
    <alternativeName>
        <fullName evidence="1">Type I dehydroquinase</fullName>
        <shortName evidence="1">DHQ1</shortName>
    </alternativeName>
</protein>
<feature type="chain" id="PRO_1000043169" description="3-dehydroquinate dehydratase">
    <location>
        <begin position="1"/>
        <end position="252"/>
    </location>
</feature>
<feature type="active site" description="Proton donor/acceptor" evidence="1">
    <location>
        <position position="143"/>
    </location>
</feature>
<feature type="active site" description="Schiff-base intermediate with substrate" evidence="1">
    <location>
        <position position="170"/>
    </location>
</feature>
<feature type="binding site" evidence="1">
    <location>
        <begin position="46"/>
        <end position="48"/>
    </location>
    <ligand>
        <name>3-dehydroquinate</name>
        <dbReference type="ChEBI" id="CHEBI:32364"/>
    </ligand>
</feature>
<feature type="binding site" evidence="1">
    <location>
        <position position="82"/>
    </location>
    <ligand>
        <name>3-dehydroquinate</name>
        <dbReference type="ChEBI" id="CHEBI:32364"/>
    </ligand>
</feature>
<feature type="binding site" evidence="1">
    <location>
        <position position="212"/>
    </location>
    <ligand>
        <name>3-dehydroquinate</name>
        <dbReference type="ChEBI" id="CHEBI:32364"/>
    </ligand>
</feature>
<feature type="binding site" evidence="1">
    <location>
        <position position="231"/>
    </location>
    <ligand>
        <name>3-dehydroquinate</name>
        <dbReference type="ChEBI" id="CHEBI:32364"/>
    </ligand>
</feature>
<feature type="binding site" evidence="1">
    <location>
        <position position="235"/>
    </location>
    <ligand>
        <name>3-dehydroquinate</name>
        <dbReference type="ChEBI" id="CHEBI:32364"/>
    </ligand>
</feature>
<comment type="function">
    <text evidence="1">Involved in the third step of the chorismate pathway, which leads to the biosynthesis of aromatic amino acids. Catalyzes the cis-dehydration of 3-dehydroquinate (DHQ) and introduces the first double bond of the aromatic ring to yield 3-dehydroshikimate.</text>
</comment>
<comment type="catalytic activity">
    <reaction evidence="1">
        <text>3-dehydroquinate = 3-dehydroshikimate + H2O</text>
        <dbReference type="Rhea" id="RHEA:21096"/>
        <dbReference type="ChEBI" id="CHEBI:15377"/>
        <dbReference type="ChEBI" id="CHEBI:16630"/>
        <dbReference type="ChEBI" id="CHEBI:32364"/>
        <dbReference type="EC" id="4.2.1.10"/>
    </reaction>
</comment>
<comment type="pathway">
    <text evidence="1">Metabolic intermediate biosynthesis; chorismate biosynthesis; chorismate from D-erythrose 4-phosphate and phosphoenolpyruvate: step 3/7.</text>
</comment>
<comment type="subunit">
    <text evidence="1">Homodimer.</text>
</comment>
<comment type="similarity">
    <text evidence="1">Belongs to the type-I 3-dehydroquinase family.</text>
</comment>
<evidence type="ECO:0000255" key="1">
    <source>
        <dbReference type="HAMAP-Rule" id="MF_00214"/>
    </source>
</evidence>